<proteinExistence type="inferred from homology"/>
<accession>A6W133</accession>
<sequence>MSYHEVNFIEMRVIGCLMEKEITTPDQYPLSLNALVNACNQKSNREPVTQLSEIEVQDALDALVSRGLVTEINASHSRVSKYQHRFCNTEFSDLQLSPAETAIICLMFVRGAQTPGELRSRSGRLHSFQSRDEVELALQSLQTKTGGPYVCLLPREPGKREQRYQECFCSESDRPAASFSSDTSDEYTQQLEAKVKELEAQVEKLNERINELENASGL</sequence>
<reference key="1">
    <citation type="submission" date="2007-06" db="EMBL/GenBank/DDBJ databases">
        <title>Complete sequence of Marinomonas sp. MWYL1.</title>
        <authorList>
            <consortium name="US DOE Joint Genome Institute"/>
            <person name="Copeland A."/>
            <person name="Lucas S."/>
            <person name="Lapidus A."/>
            <person name="Barry K."/>
            <person name="Glavina del Rio T."/>
            <person name="Dalin E."/>
            <person name="Tice H."/>
            <person name="Pitluck S."/>
            <person name="Kiss H."/>
            <person name="Brettin T."/>
            <person name="Bruce D."/>
            <person name="Detter J.C."/>
            <person name="Han C."/>
            <person name="Schmutz J."/>
            <person name="Larimer F."/>
            <person name="Land M."/>
            <person name="Hauser L."/>
            <person name="Kyrpides N."/>
            <person name="Kim E."/>
            <person name="Johnston A.W.B."/>
            <person name="Todd J.D."/>
            <person name="Rogers R."/>
            <person name="Wexler M."/>
            <person name="Bond P.L."/>
            <person name="Li Y."/>
            <person name="Richardson P."/>
        </authorList>
    </citation>
    <scope>NUCLEOTIDE SEQUENCE [LARGE SCALE GENOMIC DNA]</scope>
    <source>
        <strain>MWYL1</strain>
    </source>
</reference>
<organism>
    <name type="scientific">Marinomonas sp. (strain MWYL1)</name>
    <dbReference type="NCBI Taxonomy" id="400668"/>
    <lineage>
        <taxon>Bacteria</taxon>
        <taxon>Pseudomonadati</taxon>
        <taxon>Pseudomonadota</taxon>
        <taxon>Gammaproteobacteria</taxon>
        <taxon>Oceanospirillales</taxon>
        <taxon>Oceanospirillaceae</taxon>
        <taxon>Marinomonas</taxon>
    </lineage>
</organism>
<name>Y3509_MARMS</name>
<dbReference type="EMBL" id="CP000749">
    <property type="protein sequence ID" value="ABR72412.1"/>
    <property type="molecule type" value="Genomic_DNA"/>
</dbReference>
<dbReference type="SMR" id="A6W133"/>
<dbReference type="STRING" id="400668.Mmwyl1_3509"/>
<dbReference type="KEGG" id="mmw:Mmwyl1_3509"/>
<dbReference type="eggNOG" id="COG3132">
    <property type="taxonomic scope" value="Bacteria"/>
</dbReference>
<dbReference type="HOGENOM" id="CLU_057831_2_0_6"/>
<dbReference type="OrthoDB" id="9784785at2"/>
<dbReference type="Gene3D" id="1.10.10.10">
    <property type="entry name" value="Winged helix-like DNA-binding domain superfamily/Winged helix DNA-binding domain"/>
    <property type="match status" value="2"/>
</dbReference>
<dbReference type="HAMAP" id="MF_01584">
    <property type="entry name" value="UPF0502"/>
    <property type="match status" value="1"/>
</dbReference>
<dbReference type="InterPro" id="IPR007432">
    <property type="entry name" value="DUF480"/>
</dbReference>
<dbReference type="InterPro" id="IPR036388">
    <property type="entry name" value="WH-like_DNA-bd_sf"/>
</dbReference>
<dbReference type="InterPro" id="IPR036390">
    <property type="entry name" value="WH_DNA-bd_sf"/>
</dbReference>
<dbReference type="PANTHER" id="PTHR38768">
    <property type="entry name" value="UPF0502 PROTEIN YCEH"/>
    <property type="match status" value="1"/>
</dbReference>
<dbReference type="PANTHER" id="PTHR38768:SF1">
    <property type="entry name" value="UPF0502 PROTEIN YCEH"/>
    <property type="match status" value="1"/>
</dbReference>
<dbReference type="Pfam" id="PF04337">
    <property type="entry name" value="DUF480"/>
    <property type="match status" value="1"/>
</dbReference>
<dbReference type="SUPFAM" id="SSF46785">
    <property type="entry name" value="Winged helix' DNA-binding domain"/>
    <property type="match status" value="2"/>
</dbReference>
<comment type="similarity">
    <text evidence="1">Belongs to the UPF0502 family.</text>
</comment>
<evidence type="ECO:0000255" key="1">
    <source>
        <dbReference type="HAMAP-Rule" id="MF_01584"/>
    </source>
</evidence>
<feature type="chain" id="PRO_0000382564" description="UPF0502 protein Mmwyl1_3509">
    <location>
        <begin position="1"/>
        <end position="218"/>
    </location>
</feature>
<protein>
    <recommendedName>
        <fullName evidence="1">UPF0502 protein Mmwyl1_3509</fullName>
    </recommendedName>
</protein>
<gene>
    <name type="ordered locus">Mmwyl1_3509</name>
</gene>